<keyword id="KW-0507">mRNA processing</keyword>
<keyword id="KW-0508">mRNA splicing</keyword>
<keyword id="KW-0539">Nucleus</keyword>
<keyword id="KW-1185">Reference proteome</keyword>
<gene>
    <name evidence="6" type="primary">rtf2</name>
    <name evidence="6" type="ORF">SPAC1D4.09c</name>
</gene>
<name>RTF2_SCHPO</name>
<feature type="chain" id="PRO_0000116471" description="Splicing factor rtf2">
    <location>
        <begin position="1"/>
        <end position="240"/>
    </location>
</feature>
<feature type="region of interest" description="Disordered" evidence="1">
    <location>
        <begin position="1"/>
        <end position="22"/>
    </location>
</feature>
<feature type="region of interest" description="Disordered" evidence="1">
    <location>
        <begin position="181"/>
        <end position="240"/>
    </location>
</feature>
<feature type="compositionally biased region" description="Basic residues" evidence="1">
    <location>
        <begin position="185"/>
        <end position="210"/>
    </location>
</feature>
<feature type="compositionally biased region" description="Basic and acidic residues" evidence="1">
    <location>
        <begin position="211"/>
        <end position="224"/>
    </location>
</feature>
<feature type="compositionally biased region" description="Basic and acidic residues" evidence="1">
    <location>
        <begin position="231"/>
        <end position="240"/>
    </location>
</feature>
<organism>
    <name type="scientific">Schizosaccharomyces pombe (strain 972 / ATCC 24843)</name>
    <name type="common">Fission yeast</name>
    <dbReference type="NCBI Taxonomy" id="284812"/>
    <lineage>
        <taxon>Eukaryota</taxon>
        <taxon>Fungi</taxon>
        <taxon>Dikarya</taxon>
        <taxon>Ascomycota</taxon>
        <taxon>Taphrinomycotina</taxon>
        <taxon>Schizosaccharomycetes</taxon>
        <taxon>Schizosaccharomycetales</taxon>
        <taxon>Schizosaccharomycetaceae</taxon>
        <taxon>Schizosaccharomyces</taxon>
    </lineage>
</organism>
<dbReference type="EMBL" id="CU329670">
    <property type="protein sequence ID" value="CAA93218.1"/>
    <property type="molecule type" value="Genomic_DNA"/>
</dbReference>
<dbReference type="PIR" id="T38050">
    <property type="entry name" value="T38050"/>
</dbReference>
<dbReference type="RefSeq" id="NP_593022.1">
    <property type="nucleotide sequence ID" value="NM_001018421.2"/>
</dbReference>
<dbReference type="SMR" id="Q10154"/>
<dbReference type="BioGRID" id="278929">
    <property type="interactions" value="56"/>
</dbReference>
<dbReference type="DIP" id="DIP-48846N"/>
<dbReference type="FunCoup" id="Q10154">
    <property type="interactions" value="890"/>
</dbReference>
<dbReference type="IntAct" id="Q10154">
    <property type="interactions" value="1"/>
</dbReference>
<dbReference type="STRING" id="284812.Q10154"/>
<dbReference type="PaxDb" id="4896-SPAC1D4.09c.1"/>
<dbReference type="EnsemblFungi" id="SPAC1D4.09c.1">
    <property type="protein sequence ID" value="SPAC1D4.09c.1:pep"/>
    <property type="gene ID" value="SPAC1D4.09c"/>
</dbReference>
<dbReference type="GeneID" id="2542468"/>
<dbReference type="KEGG" id="spo:2542468"/>
<dbReference type="PomBase" id="SPAC1D4.09c">
    <property type="gene designation" value="rtf2"/>
</dbReference>
<dbReference type="VEuPathDB" id="FungiDB:SPAC1D4.09c"/>
<dbReference type="eggNOG" id="KOG3113">
    <property type="taxonomic scope" value="Eukaryota"/>
</dbReference>
<dbReference type="HOGENOM" id="CLU_048955_3_0_1"/>
<dbReference type="InParanoid" id="Q10154"/>
<dbReference type="OMA" id="EFRWLHC"/>
<dbReference type="PhylomeDB" id="Q10154"/>
<dbReference type="PRO" id="PR:Q10154"/>
<dbReference type="Proteomes" id="UP000002485">
    <property type="component" value="Chromosome I"/>
</dbReference>
<dbReference type="GO" id="GO:0005634">
    <property type="term" value="C:nucleus"/>
    <property type="evidence" value="ECO:0000314"/>
    <property type="project" value="PomBase"/>
</dbReference>
<dbReference type="GO" id="GO:0005681">
    <property type="term" value="C:spliceosomal complex"/>
    <property type="evidence" value="ECO:0000269"/>
    <property type="project" value="PomBase"/>
</dbReference>
<dbReference type="GO" id="GO:1902979">
    <property type="term" value="P:mitotic DNA replication termination"/>
    <property type="evidence" value="ECO:0007669"/>
    <property type="project" value="InterPro"/>
</dbReference>
<dbReference type="GO" id="GO:0000398">
    <property type="term" value="P:mRNA splicing, via spliceosome"/>
    <property type="evidence" value="ECO:0000269"/>
    <property type="project" value="PomBase"/>
</dbReference>
<dbReference type="CDD" id="cd16653">
    <property type="entry name" value="RING-like_Rtf2"/>
    <property type="match status" value="1"/>
</dbReference>
<dbReference type="Gene3D" id="3.30.40.10">
    <property type="entry name" value="Zinc/RING finger domain, C3HC4 (zinc finger)"/>
    <property type="match status" value="1"/>
</dbReference>
<dbReference type="InterPro" id="IPR006735">
    <property type="entry name" value="Rtf2"/>
</dbReference>
<dbReference type="InterPro" id="IPR027799">
    <property type="entry name" value="Rtf2_RING-finger"/>
</dbReference>
<dbReference type="InterPro" id="IPR013083">
    <property type="entry name" value="Znf_RING/FYVE/PHD"/>
</dbReference>
<dbReference type="PANTHER" id="PTHR12775">
    <property type="entry name" value="PROTEIN C20ORF43 HOMOLOG"/>
    <property type="match status" value="1"/>
</dbReference>
<dbReference type="PANTHER" id="PTHR12775:SF0">
    <property type="entry name" value="REPLICATION TERMINATION FACTOR 2"/>
    <property type="match status" value="1"/>
</dbReference>
<dbReference type="Pfam" id="PF04641">
    <property type="entry name" value="Rtf2"/>
    <property type="match status" value="1"/>
</dbReference>
<dbReference type="SUPFAM" id="SSF57850">
    <property type="entry name" value="RING/U-box"/>
    <property type="match status" value="1"/>
</dbReference>
<protein>
    <recommendedName>
        <fullName evidence="6">Splicing factor rtf2</fullName>
    </recommendedName>
</protein>
<proteinExistence type="evidence at protein level"/>
<reference key="1">
    <citation type="journal article" date="2002" name="Nature">
        <title>The genome sequence of Schizosaccharomyces pombe.</title>
        <authorList>
            <person name="Wood V."/>
            <person name="Gwilliam R."/>
            <person name="Rajandream M.A."/>
            <person name="Lyne M.H."/>
            <person name="Lyne R."/>
            <person name="Stewart A."/>
            <person name="Sgouros J.G."/>
            <person name="Peat N."/>
            <person name="Hayles J."/>
            <person name="Baker S.G."/>
            <person name="Basham D."/>
            <person name="Bowman S."/>
            <person name="Brooks K."/>
            <person name="Brown D."/>
            <person name="Brown S."/>
            <person name="Chillingworth T."/>
            <person name="Churcher C.M."/>
            <person name="Collins M."/>
            <person name="Connor R."/>
            <person name="Cronin A."/>
            <person name="Davis P."/>
            <person name="Feltwell T."/>
            <person name="Fraser A."/>
            <person name="Gentles S."/>
            <person name="Goble A."/>
            <person name="Hamlin N."/>
            <person name="Harris D.E."/>
            <person name="Hidalgo J."/>
            <person name="Hodgson G."/>
            <person name="Holroyd S."/>
            <person name="Hornsby T."/>
            <person name="Howarth S."/>
            <person name="Huckle E.J."/>
            <person name="Hunt S."/>
            <person name="Jagels K."/>
            <person name="James K.D."/>
            <person name="Jones L."/>
            <person name="Jones M."/>
            <person name="Leather S."/>
            <person name="McDonald S."/>
            <person name="McLean J."/>
            <person name="Mooney P."/>
            <person name="Moule S."/>
            <person name="Mungall K.L."/>
            <person name="Murphy L.D."/>
            <person name="Niblett D."/>
            <person name="Odell C."/>
            <person name="Oliver K."/>
            <person name="O'Neil S."/>
            <person name="Pearson D."/>
            <person name="Quail M.A."/>
            <person name="Rabbinowitsch E."/>
            <person name="Rutherford K.M."/>
            <person name="Rutter S."/>
            <person name="Saunders D."/>
            <person name="Seeger K."/>
            <person name="Sharp S."/>
            <person name="Skelton J."/>
            <person name="Simmonds M.N."/>
            <person name="Squares R."/>
            <person name="Squares S."/>
            <person name="Stevens K."/>
            <person name="Taylor K."/>
            <person name="Taylor R.G."/>
            <person name="Tivey A."/>
            <person name="Walsh S.V."/>
            <person name="Warren T."/>
            <person name="Whitehead S."/>
            <person name="Woodward J.R."/>
            <person name="Volckaert G."/>
            <person name="Aert R."/>
            <person name="Robben J."/>
            <person name="Grymonprez B."/>
            <person name="Weltjens I."/>
            <person name="Vanstreels E."/>
            <person name="Rieger M."/>
            <person name="Schaefer M."/>
            <person name="Mueller-Auer S."/>
            <person name="Gabel C."/>
            <person name="Fuchs M."/>
            <person name="Duesterhoeft A."/>
            <person name="Fritzc C."/>
            <person name="Holzer E."/>
            <person name="Moestl D."/>
            <person name="Hilbert H."/>
            <person name="Borzym K."/>
            <person name="Langer I."/>
            <person name="Beck A."/>
            <person name="Lehrach H."/>
            <person name="Reinhardt R."/>
            <person name="Pohl T.M."/>
            <person name="Eger P."/>
            <person name="Zimmermann W."/>
            <person name="Wedler H."/>
            <person name="Wambutt R."/>
            <person name="Purnelle B."/>
            <person name="Goffeau A."/>
            <person name="Cadieu E."/>
            <person name="Dreano S."/>
            <person name="Gloux S."/>
            <person name="Lelaure V."/>
            <person name="Mottier S."/>
            <person name="Galibert F."/>
            <person name="Aves S.J."/>
            <person name="Xiang Z."/>
            <person name="Hunt C."/>
            <person name="Moore K."/>
            <person name="Hurst S.M."/>
            <person name="Lucas M."/>
            <person name="Rochet M."/>
            <person name="Gaillardin C."/>
            <person name="Tallada V.A."/>
            <person name="Garzon A."/>
            <person name="Thode G."/>
            <person name="Daga R.R."/>
            <person name="Cruzado L."/>
            <person name="Jimenez J."/>
            <person name="Sanchez M."/>
            <person name="del Rey F."/>
            <person name="Benito J."/>
            <person name="Dominguez A."/>
            <person name="Revuelta J.L."/>
            <person name="Moreno S."/>
            <person name="Armstrong J."/>
            <person name="Forsburg S.L."/>
            <person name="Cerutti L."/>
            <person name="Lowe T."/>
            <person name="McCombie W.R."/>
            <person name="Paulsen I."/>
            <person name="Potashkin J."/>
            <person name="Shpakovski G.V."/>
            <person name="Ussery D."/>
            <person name="Barrell B.G."/>
            <person name="Nurse P."/>
        </authorList>
    </citation>
    <scope>NUCLEOTIDE SEQUENCE [LARGE SCALE GENOMIC DNA]</scope>
    <source>
        <strain>972 / ATCC 24843</strain>
    </source>
</reference>
<reference key="2">
    <citation type="journal article" date="2006" name="Nat. Biotechnol.">
        <title>ORFeome cloning and global analysis of protein localization in the fission yeast Schizosaccharomyces pombe.</title>
        <authorList>
            <person name="Matsuyama A."/>
            <person name="Arai R."/>
            <person name="Yashiroda Y."/>
            <person name="Shirai A."/>
            <person name="Kamata A."/>
            <person name="Sekido S."/>
            <person name="Kobayashi Y."/>
            <person name="Hashimoto A."/>
            <person name="Hamamoto M."/>
            <person name="Hiraoka Y."/>
            <person name="Horinouchi S."/>
            <person name="Yoshida M."/>
        </authorList>
    </citation>
    <scope>SUBCELLULAR LOCATION [LARGE SCALE ANALYSIS]</scope>
</reference>
<reference key="3">
    <citation type="journal article" date="2009" name="Proc. Natl. Acad. Sci. U.S.A.">
        <title>Schizosaccharomyces pombe Rtf2 mediates site-specific replication termination by inhibiting replication restart.</title>
        <authorList>
            <person name="Inagawa T."/>
            <person name="Yamada-Inagawa T."/>
            <person name="Eydmann T."/>
            <person name="Mian I.S."/>
            <person name="Wang T.S."/>
            <person name="Dalgaard J.Z."/>
        </authorList>
    </citation>
    <scope>SUBCELLULAR LOCATION</scope>
    <scope>INTERACTION WITH PCN1</scope>
    <scope>FUNCTION</scope>
</reference>
<reference key="4">
    <citation type="journal article" date="2023" name="Elife">
        <title>Schizosaccharomyces pombe Rtf2 is important for replication fork barrier activity of RTS1 via splicing of Rtf1.</title>
        <authorList>
            <person name="Budden A.M."/>
            <person name="Eravci M."/>
            <person name="Watson A.T."/>
            <person name="Campillo-Funollet E."/>
            <person name="Oliver A.W."/>
            <person name="Naiman K."/>
            <person name="Carr A.M."/>
        </authorList>
    </citation>
    <scope>FUNCTION</scope>
    <scope>DISRUPTION PHENOTYPE</scope>
</reference>
<accession>Q10154</accession>
<comment type="function">
    <text evidence="3 4">Putative splicing factor that is required for the correct splicing of a subset of pre-mRNAs (PubMed:37615341). Required for the correct splicing of rtf1, a replication termination factor that mediates site-specific replication termination at replication barrier RTS1 (PubMed:19416828, PubMed:37615341).</text>
</comment>
<comment type="subunit">
    <text evidence="3">Interacts with pcn1.</text>
</comment>
<comment type="interaction">
    <interactant intactId="EBI-15777832">
        <id>Q10154</id>
    </interactant>
    <interactant intactId="EBI-768724">
        <id>Q03392</id>
        <label>pcn1</label>
    </interactant>
    <organismsDiffer>false</organismsDiffer>
    <experiments>3</experiments>
</comment>
<comment type="subcellular location">
    <subcellularLocation>
        <location evidence="2 3">Nucleus</location>
    </subcellularLocation>
</comment>
<comment type="disruption phenotype">
    <text evidence="4">Increases intron retention in a subset of pre-mRNAs, including rtf1/Replication termination factor 1 (PubMed:37615341). Decreases replication fork arrest at the RTS1 replication fork barrier (PubMed:37615341). Sensitive to methane methylsulfonate (PubMed:37615341). No sensitivity to hydroxyurea (PubMed:37615341).</text>
</comment>
<comment type="similarity">
    <text evidence="5">Belongs to the rtf2 family.</text>
</comment>
<comment type="caution">
    <text evidence="3 4">PubMed:19416828 concluded that rtf2 mediates replication termination at the site-specific replication barrier RTS1 and interacts with pcn1/PCNA, however PubMed:37615341 reports that this function occurs downstream of rtf2, and that the interaction may be an artifact from overexpression.</text>
</comment>
<sequence length="240" mass="27057">MGNDGGSLPTRNELVKEPGKVPPLDIDFKRSVKSSQFSQCAITDEPLYPPIVSCGLGKLYNKASILQMLLDRSSVPKSPSHIKSLKDVVQLQVELDDSGKVLWLCPITRHVMSDTYQFAYIVPCGHVFEYSALKQFGEKMCFQCNQVYEEKDVIPINPNAEQLKTLSKRLLDLALSEKTHSLNKASKKSNKNGDKKRKHVSKSNSKHAKHELRTNRMLDGENVKSETSVTDMERVKRVKI</sequence>
<evidence type="ECO:0000256" key="1">
    <source>
        <dbReference type="SAM" id="MobiDB-lite"/>
    </source>
</evidence>
<evidence type="ECO:0000269" key="2">
    <source>
    </source>
</evidence>
<evidence type="ECO:0000269" key="3">
    <source>
    </source>
</evidence>
<evidence type="ECO:0000269" key="4">
    <source>
    </source>
</evidence>
<evidence type="ECO:0000305" key="5"/>
<evidence type="ECO:0000312" key="6">
    <source>
        <dbReference type="PomBase" id="SPAC1D4.09c"/>
    </source>
</evidence>